<evidence type="ECO:0000255" key="1">
    <source>
        <dbReference type="HAMAP-Rule" id="MF_01006"/>
    </source>
</evidence>
<evidence type="ECO:0000305" key="2"/>
<feature type="chain" id="PRO_0000151243" description="Undecaprenyl-diphosphatase">
    <location>
        <begin position="1"/>
        <end position="265"/>
    </location>
</feature>
<feature type="transmembrane region" description="Helical" evidence="1">
    <location>
        <begin position="38"/>
        <end position="58"/>
    </location>
</feature>
<feature type="transmembrane region" description="Helical" evidence="1">
    <location>
        <begin position="75"/>
        <end position="95"/>
    </location>
</feature>
<feature type="transmembrane region" description="Helical" evidence="1">
    <location>
        <begin position="108"/>
        <end position="128"/>
    </location>
</feature>
<feature type="transmembrane region" description="Helical" evidence="1">
    <location>
        <begin position="135"/>
        <end position="155"/>
    </location>
</feature>
<feature type="transmembrane region" description="Helical" evidence="1">
    <location>
        <begin position="181"/>
        <end position="201"/>
    </location>
</feature>
<feature type="transmembrane region" description="Helical" evidence="1">
    <location>
        <begin position="215"/>
        <end position="235"/>
    </location>
</feature>
<feature type="transmembrane region" description="Helical" evidence="1">
    <location>
        <begin position="244"/>
        <end position="264"/>
    </location>
</feature>
<protein>
    <recommendedName>
        <fullName evidence="1">Undecaprenyl-diphosphatase</fullName>
        <ecNumber evidence="1">3.6.1.27</ecNumber>
    </recommendedName>
    <alternativeName>
        <fullName evidence="1">Bacitracin resistance protein</fullName>
    </alternativeName>
    <alternativeName>
        <fullName evidence="1">Undecaprenyl pyrophosphate phosphatase</fullName>
    </alternativeName>
</protein>
<reference key="1">
    <citation type="journal article" date="2005" name="Nucleic Acids Res.">
        <title>The genome sequence of Xanthomonas oryzae pathovar oryzae KACC10331, the bacterial blight pathogen of rice.</title>
        <authorList>
            <person name="Lee B.-M."/>
            <person name="Park Y.-J."/>
            <person name="Park D.-S."/>
            <person name="Kang H.-W."/>
            <person name="Kim J.-G."/>
            <person name="Song E.-S."/>
            <person name="Park I.-C."/>
            <person name="Yoon U.-H."/>
            <person name="Hahn J.-H."/>
            <person name="Koo B.-S."/>
            <person name="Lee G.-B."/>
            <person name="Kim H."/>
            <person name="Park H.-S."/>
            <person name="Yoon K.-O."/>
            <person name="Kim J.-H."/>
            <person name="Jung C.-H."/>
            <person name="Koh N.-H."/>
            <person name="Seo J.-S."/>
            <person name="Go S.-J."/>
        </authorList>
    </citation>
    <scope>NUCLEOTIDE SEQUENCE [LARGE SCALE GENOMIC DNA]</scope>
    <source>
        <strain>KACC10331 / KXO85</strain>
    </source>
</reference>
<gene>
    <name evidence="1" type="primary">uppP</name>
    <name type="synonym">bacA</name>
    <name type="ordered locus">XOO4489</name>
</gene>
<organism>
    <name type="scientific">Xanthomonas oryzae pv. oryzae (strain KACC10331 / KXO85)</name>
    <dbReference type="NCBI Taxonomy" id="291331"/>
    <lineage>
        <taxon>Bacteria</taxon>
        <taxon>Pseudomonadati</taxon>
        <taxon>Pseudomonadota</taxon>
        <taxon>Gammaproteobacteria</taxon>
        <taxon>Lysobacterales</taxon>
        <taxon>Lysobacteraceae</taxon>
        <taxon>Xanthomonas</taxon>
    </lineage>
</organism>
<keyword id="KW-0046">Antibiotic resistance</keyword>
<keyword id="KW-0997">Cell inner membrane</keyword>
<keyword id="KW-1003">Cell membrane</keyword>
<keyword id="KW-0133">Cell shape</keyword>
<keyword id="KW-0961">Cell wall biogenesis/degradation</keyword>
<keyword id="KW-0378">Hydrolase</keyword>
<keyword id="KW-0472">Membrane</keyword>
<keyword id="KW-0573">Peptidoglycan synthesis</keyword>
<keyword id="KW-1185">Reference proteome</keyword>
<keyword id="KW-0812">Transmembrane</keyword>
<keyword id="KW-1133">Transmembrane helix</keyword>
<dbReference type="EC" id="3.6.1.27" evidence="1"/>
<dbReference type="EMBL" id="AE013598">
    <property type="protein sequence ID" value="AAW77743.1"/>
    <property type="status" value="ALT_INIT"/>
    <property type="molecule type" value="Genomic_DNA"/>
</dbReference>
<dbReference type="SMR" id="Q5GU80"/>
<dbReference type="STRING" id="291331.XOO4489"/>
<dbReference type="KEGG" id="xoo:XOO4489"/>
<dbReference type="HOGENOM" id="CLU_060296_2_0_6"/>
<dbReference type="Proteomes" id="UP000006735">
    <property type="component" value="Chromosome"/>
</dbReference>
<dbReference type="GO" id="GO:0005886">
    <property type="term" value="C:plasma membrane"/>
    <property type="evidence" value="ECO:0007669"/>
    <property type="project" value="UniProtKB-SubCell"/>
</dbReference>
<dbReference type="GO" id="GO:0050380">
    <property type="term" value="F:undecaprenyl-diphosphatase activity"/>
    <property type="evidence" value="ECO:0007669"/>
    <property type="project" value="UniProtKB-UniRule"/>
</dbReference>
<dbReference type="GO" id="GO:0071555">
    <property type="term" value="P:cell wall organization"/>
    <property type="evidence" value="ECO:0007669"/>
    <property type="project" value="UniProtKB-KW"/>
</dbReference>
<dbReference type="GO" id="GO:0009252">
    <property type="term" value="P:peptidoglycan biosynthetic process"/>
    <property type="evidence" value="ECO:0007669"/>
    <property type="project" value="UniProtKB-KW"/>
</dbReference>
<dbReference type="GO" id="GO:0008360">
    <property type="term" value="P:regulation of cell shape"/>
    <property type="evidence" value="ECO:0007669"/>
    <property type="project" value="UniProtKB-KW"/>
</dbReference>
<dbReference type="GO" id="GO:0046677">
    <property type="term" value="P:response to antibiotic"/>
    <property type="evidence" value="ECO:0007669"/>
    <property type="project" value="UniProtKB-UniRule"/>
</dbReference>
<dbReference type="HAMAP" id="MF_01006">
    <property type="entry name" value="Undec_diphosphatase"/>
    <property type="match status" value="1"/>
</dbReference>
<dbReference type="InterPro" id="IPR003824">
    <property type="entry name" value="UppP"/>
</dbReference>
<dbReference type="NCBIfam" id="NF001390">
    <property type="entry name" value="PRK00281.1-4"/>
    <property type="match status" value="1"/>
</dbReference>
<dbReference type="PANTHER" id="PTHR30622">
    <property type="entry name" value="UNDECAPRENYL-DIPHOSPHATASE"/>
    <property type="match status" value="1"/>
</dbReference>
<dbReference type="PANTHER" id="PTHR30622:SF3">
    <property type="entry name" value="UNDECAPRENYL-DIPHOSPHATASE"/>
    <property type="match status" value="1"/>
</dbReference>
<dbReference type="Pfam" id="PF02673">
    <property type="entry name" value="BacA"/>
    <property type="match status" value="1"/>
</dbReference>
<comment type="function">
    <text evidence="1">Catalyzes the dephosphorylation of undecaprenyl diphosphate (UPP). Confers resistance to bacitracin.</text>
</comment>
<comment type="catalytic activity">
    <reaction evidence="1">
        <text>di-trans,octa-cis-undecaprenyl diphosphate + H2O = di-trans,octa-cis-undecaprenyl phosphate + phosphate + H(+)</text>
        <dbReference type="Rhea" id="RHEA:28094"/>
        <dbReference type="ChEBI" id="CHEBI:15377"/>
        <dbReference type="ChEBI" id="CHEBI:15378"/>
        <dbReference type="ChEBI" id="CHEBI:43474"/>
        <dbReference type="ChEBI" id="CHEBI:58405"/>
        <dbReference type="ChEBI" id="CHEBI:60392"/>
        <dbReference type="EC" id="3.6.1.27"/>
    </reaction>
</comment>
<comment type="subcellular location">
    <subcellularLocation>
        <location evidence="1">Cell inner membrane</location>
        <topology evidence="1">Multi-pass membrane protein</topology>
    </subcellularLocation>
</comment>
<comment type="miscellaneous">
    <text>Bacitracin is thought to be involved in the inhibition of peptidoglycan synthesis by sequestering undecaprenyl diphosphate, thereby reducing the pool of lipid carrier available.</text>
</comment>
<comment type="similarity">
    <text evidence="1">Belongs to the UppP family.</text>
</comment>
<comment type="sequence caution" evidence="2">
    <conflict type="erroneous initiation">
        <sequence resource="EMBL-CDS" id="AAW77743"/>
    </conflict>
</comment>
<accession>Q5GU80</accession>
<sequence>MSDLISALLLGILEGLTEFLPISSTGHLLIAEQWLGRRSDFFNIVIQAGAILAICLALRQRLWTLATGLGERDNRDYVLKVSVAFLVTAVVGLIVRKAGWQLPETLQPVAWALLIGGVWMLVAEHVAGKLPERDVVTWKVAIAVGLAQVVAGVFPGTSRSASTIFIAMLLGLSRRSAAADFVFMVGIPTMFAASGYALLEMYKEGGFGTEHWADVAVAFVAATITGFVVVKWLLSYIKKHRFTVFAVYRIVLGAALLLWLPAAAG</sequence>
<proteinExistence type="inferred from homology"/>
<name>UPPP_XANOR</name>